<sequence>MRETKDLREKARQFLTILIPILITQAGLSLITVLDTVMSGKVSAADLAGVAIGSSLWTPVYTGLAGILTAVTPMVAQLMGAKRQKDVPYTVIQSIYVAGIISLAVIVSGYFLIDPVLENLDLERKVAVIAKQYLICIGLGILPLFVYNVMRCFIDSLGKTRVTMLITLCSLPINFVLNYLFIFGNFGFPKLGGAGAGLASAITYWCICLISLYIVHKKTPFHQFRIFGTFYSFSFAESMKLLKIGIPIGFAIFFETSIFAAVTLLMSHFDTVTIASHQAAMNFASLLYMLPLSVSMTLTIVVGFEAGAKRFKDSRAYSYLGISIAVGFSLFTALIILLFREQIAGLYAADRDVLLLTKDFLLYALFFQLSDAIAAPIQGALRGYKDVNYTLVTALVSYWIIGLPVGFVIGTYTSFGAFGYWIGLITGLAAGAVGLFFRLKRIQNRYIHTQSM</sequence>
<comment type="function">
    <text evidence="1">Multidrug efflux pump.</text>
</comment>
<comment type="subcellular location">
    <subcellularLocation>
        <location evidence="1">Cell membrane</location>
        <topology evidence="1">Multi-pass membrane protein</topology>
    </subcellularLocation>
</comment>
<comment type="similarity">
    <text evidence="3">Belongs to the multi antimicrobial extrusion (MATE) (TC 2.A.66.1) family.</text>
</comment>
<organism>
    <name type="scientific">Bacillus licheniformis (strain ATCC 14580 / DSM 13 / JCM 2505 / CCUG 7422 / NBRC 12200 / NCIMB 9375 / NCTC 10341 / NRRL NRS-1264 / Gibson 46)</name>
    <dbReference type="NCBI Taxonomy" id="279010"/>
    <lineage>
        <taxon>Bacteria</taxon>
        <taxon>Bacillati</taxon>
        <taxon>Bacillota</taxon>
        <taxon>Bacilli</taxon>
        <taxon>Bacillales</taxon>
        <taxon>Bacillaceae</taxon>
        <taxon>Bacillus</taxon>
    </lineage>
</organism>
<reference key="1">
    <citation type="journal article" date="2004" name="J. Mol. Microbiol. Biotechnol.">
        <title>The complete genome sequence of Bacillus licheniformis DSM13, an organism with great industrial potential.</title>
        <authorList>
            <person name="Veith B."/>
            <person name="Herzberg C."/>
            <person name="Steckel S."/>
            <person name="Feesche J."/>
            <person name="Maurer K.H."/>
            <person name="Ehrenreich P."/>
            <person name="Baeumer S."/>
            <person name="Henne A."/>
            <person name="Liesegang H."/>
            <person name="Merkl R."/>
            <person name="Ehrenreich A."/>
            <person name="Gottschalk G."/>
        </authorList>
    </citation>
    <scope>NUCLEOTIDE SEQUENCE [LARGE SCALE GENOMIC DNA]</scope>
    <source>
        <strain>ATCC 14580 / DSM 13 / JCM 2505 / CCUG 7422 / NBRC 12200 / NCIMB 9375 / NCTC 10341 / NRRL NRS-1264 / Gibson 46</strain>
    </source>
</reference>
<reference key="2">
    <citation type="journal article" date="2004" name="Genome Biol.">
        <title>Complete genome sequence of the industrial bacterium Bacillus licheniformis and comparisons with closely related Bacillus species.</title>
        <authorList>
            <person name="Rey M.W."/>
            <person name="Ramaiya P."/>
            <person name="Nelson B.A."/>
            <person name="Brody-Karpin S.D."/>
            <person name="Zaretsky E.J."/>
            <person name="Tang M."/>
            <person name="Lopez de Leon A."/>
            <person name="Xiang H."/>
            <person name="Gusti V."/>
            <person name="Clausen I.G."/>
            <person name="Olsen P.B."/>
            <person name="Rasmussen M.D."/>
            <person name="Andersen J.T."/>
            <person name="Joergensen P.L."/>
            <person name="Larsen T.S."/>
            <person name="Sorokin A."/>
            <person name="Bolotin A."/>
            <person name="Lapidus A."/>
            <person name="Galleron N."/>
            <person name="Ehrlich S.D."/>
            <person name="Berka R.M."/>
        </authorList>
    </citation>
    <scope>NUCLEOTIDE SEQUENCE [LARGE SCALE GENOMIC DNA]</scope>
    <source>
        <strain>ATCC 14580 / DSM 13 / JCM 2505 / CCUG 7422 / NBRC 12200 / NCIMB 9375 / NCTC 10341 / NRRL NRS-1264 / Gibson 46</strain>
    </source>
</reference>
<protein>
    <recommendedName>
        <fullName>Probable multidrug resistance protein NorM</fullName>
    </recommendedName>
    <alternativeName>
        <fullName>Multidrug-efflux transporter</fullName>
    </alternativeName>
</protein>
<name>NORM_BACLD</name>
<feature type="chain" id="PRO_0000164203" description="Probable multidrug resistance protein NorM">
    <location>
        <begin position="1"/>
        <end position="452"/>
    </location>
</feature>
<feature type="transmembrane region" description="Helical" evidence="2">
    <location>
        <begin position="12"/>
        <end position="34"/>
    </location>
</feature>
<feature type="transmembrane region" description="Helical" evidence="2">
    <location>
        <begin position="49"/>
        <end position="71"/>
    </location>
</feature>
<feature type="transmembrane region" description="Helical" evidence="2">
    <location>
        <begin position="91"/>
        <end position="113"/>
    </location>
</feature>
<feature type="transmembrane region" description="Helical" evidence="2">
    <location>
        <begin position="128"/>
        <end position="150"/>
    </location>
</feature>
<feature type="transmembrane region" description="Helical" evidence="2">
    <location>
        <begin position="162"/>
        <end position="184"/>
    </location>
</feature>
<feature type="transmembrane region" description="Helical" evidence="2">
    <location>
        <begin position="194"/>
        <end position="216"/>
    </location>
</feature>
<feature type="transmembrane region" description="Helical" evidence="2">
    <location>
        <begin position="245"/>
        <end position="267"/>
    </location>
</feature>
<feature type="transmembrane region" description="Helical" evidence="2">
    <location>
        <begin position="282"/>
        <end position="304"/>
    </location>
</feature>
<feature type="transmembrane region" description="Helical" evidence="2">
    <location>
        <begin position="317"/>
        <end position="339"/>
    </location>
</feature>
<feature type="transmembrane region" description="Helical" evidence="2">
    <location>
        <begin position="359"/>
        <end position="381"/>
    </location>
</feature>
<feature type="transmembrane region" description="Helical" evidence="2">
    <location>
        <begin position="388"/>
        <end position="410"/>
    </location>
</feature>
<feature type="transmembrane region" description="Helical" evidence="2">
    <location>
        <begin position="415"/>
        <end position="437"/>
    </location>
</feature>
<proteinExistence type="inferred from homology"/>
<gene>
    <name type="primary">norM</name>
    <name type="ordered locus">BLi02265</name>
    <name type="ordered locus">BL01465</name>
</gene>
<keyword id="KW-0050">Antiport</keyword>
<keyword id="KW-1003">Cell membrane</keyword>
<keyword id="KW-0406">Ion transport</keyword>
<keyword id="KW-0472">Membrane</keyword>
<keyword id="KW-1185">Reference proteome</keyword>
<keyword id="KW-0812">Transmembrane</keyword>
<keyword id="KW-1133">Transmembrane helix</keyword>
<keyword id="KW-0813">Transport</keyword>
<accession>Q65IG9</accession>
<accession>Q62TX1</accession>
<dbReference type="EMBL" id="AE017333">
    <property type="protein sequence ID" value="AAU41145.1"/>
    <property type="molecule type" value="Genomic_DNA"/>
</dbReference>
<dbReference type="EMBL" id="CP000002">
    <property type="protein sequence ID" value="AAU23788.1"/>
    <property type="molecule type" value="Genomic_DNA"/>
</dbReference>
<dbReference type="RefSeq" id="WP_009328059.1">
    <property type="nucleotide sequence ID" value="NC_006322.1"/>
</dbReference>
<dbReference type="SMR" id="Q65IG9"/>
<dbReference type="STRING" id="279010.BL01465"/>
<dbReference type="DNASU" id="3027280"/>
<dbReference type="KEGG" id="bld:BLi02265"/>
<dbReference type="KEGG" id="bli:BL01465"/>
<dbReference type="eggNOG" id="COG0534">
    <property type="taxonomic scope" value="Bacteria"/>
</dbReference>
<dbReference type="HOGENOM" id="CLU_012893_6_0_9"/>
<dbReference type="Proteomes" id="UP000000606">
    <property type="component" value="Chromosome"/>
</dbReference>
<dbReference type="Bgee" id="BL01465">
    <property type="expression patterns" value="Expressed in skin epidermis and 5 other cell types or tissues"/>
</dbReference>
<dbReference type="GO" id="GO:0005886">
    <property type="term" value="C:plasma membrane"/>
    <property type="evidence" value="ECO:0007669"/>
    <property type="project" value="UniProtKB-SubCell"/>
</dbReference>
<dbReference type="GO" id="GO:0015297">
    <property type="term" value="F:antiporter activity"/>
    <property type="evidence" value="ECO:0007669"/>
    <property type="project" value="UniProtKB-KW"/>
</dbReference>
<dbReference type="GO" id="GO:0042910">
    <property type="term" value="F:xenobiotic transmembrane transporter activity"/>
    <property type="evidence" value="ECO:0007669"/>
    <property type="project" value="InterPro"/>
</dbReference>
<dbReference type="GO" id="GO:0006811">
    <property type="term" value="P:monoatomic ion transport"/>
    <property type="evidence" value="ECO:0007669"/>
    <property type="project" value="UniProtKB-KW"/>
</dbReference>
<dbReference type="CDD" id="cd13131">
    <property type="entry name" value="MATE_NorM_like"/>
    <property type="match status" value="1"/>
</dbReference>
<dbReference type="InterPro" id="IPR002528">
    <property type="entry name" value="MATE_fam"/>
</dbReference>
<dbReference type="InterPro" id="IPR050222">
    <property type="entry name" value="MATE_MdtK"/>
</dbReference>
<dbReference type="InterPro" id="IPR048279">
    <property type="entry name" value="MdtK-like"/>
</dbReference>
<dbReference type="NCBIfam" id="TIGR00797">
    <property type="entry name" value="matE"/>
    <property type="match status" value="1"/>
</dbReference>
<dbReference type="PANTHER" id="PTHR43298:SF2">
    <property type="entry name" value="FMN_FAD EXPORTER YEEO-RELATED"/>
    <property type="match status" value="1"/>
</dbReference>
<dbReference type="PANTHER" id="PTHR43298">
    <property type="entry name" value="MULTIDRUG RESISTANCE PROTEIN NORM-RELATED"/>
    <property type="match status" value="1"/>
</dbReference>
<dbReference type="Pfam" id="PF01554">
    <property type="entry name" value="MatE"/>
    <property type="match status" value="2"/>
</dbReference>
<dbReference type="PIRSF" id="PIRSF006603">
    <property type="entry name" value="DinF"/>
    <property type="match status" value="1"/>
</dbReference>
<evidence type="ECO:0000250" key="1"/>
<evidence type="ECO:0000255" key="2"/>
<evidence type="ECO:0000305" key="3"/>